<evidence type="ECO:0000255" key="1">
    <source>
        <dbReference type="HAMAP-Rule" id="MF_01343"/>
    </source>
</evidence>
<evidence type="ECO:0000305" key="2"/>
<keyword id="KW-0687">Ribonucleoprotein</keyword>
<keyword id="KW-0689">Ribosomal protein</keyword>
<keyword id="KW-0694">RNA-binding</keyword>
<keyword id="KW-0699">rRNA-binding</keyword>
<organism>
    <name type="scientific">Campylobacter jejuni subsp. jejuni serotype O:23/36 (strain 81-176)</name>
    <dbReference type="NCBI Taxonomy" id="354242"/>
    <lineage>
        <taxon>Bacteria</taxon>
        <taxon>Pseudomonadati</taxon>
        <taxon>Campylobacterota</taxon>
        <taxon>Epsilonproteobacteria</taxon>
        <taxon>Campylobacterales</taxon>
        <taxon>Campylobacteraceae</taxon>
        <taxon>Campylobacter</taxon>
    </lineage>
</organism>
<sequence>MALDSAKKAEIVAKFAKKPGDTGSTEVQVALLTARIAELTEHLKIYKKDFSSRLGLLKLVGQRKRLLSYLKRKDYNSYSKLITELNLRDK</sequence>
<proteinExistence type="inferred from homology"/>
<dbReference type="EMBL" id="U06951">
    <property type="protein sequence ID" value="AAA61510.1"/>
    <property type="molecule type" value="Genomic_DNA"/>
</dbReference>
<dbReference type="EMBL" id="CP000538">
    <property type="protein sequence ID" value="EAQ72308.1"/>
    <property type="molecule type" value="Genomic_DNA"/>
</dbReference>
<dbReference type="PIR" id="I40773">
    <property type="entry name" value="I40773"/>
</dbReference>
<dbReference type="RefSeq" id="WP_002852579.1">
    <property type="nucleotide sequence ID" value="NC_008787.1"/>
</dbReference>
<dbReference type="SMR" id="A1VZL9"/>
<dbReference type="KEGG" id="cjj:CJJ81176_0892"/>
<dbReference type="eggNOG" id="COG0184">
    <property type="taxonomic scope" value="Bacteria"/>
</dbReference>
<dbReference type="HOGENOM" id="CLU_148518_0_0_7"/>
<dbReference type="Proteomes" id="UP000000646">
    <property type="component" value="Chromosome"/>
</dbReference>
<dbReference type="GO" id="GO:0022627">
    <property type="term" value="C:cytosolic small ribosomal subunit"/>
    <property type="evidence" value="ECO:0007669"/>
    <property type="project" value="TreeGrafter"/>
</dbReference>
<dbReference type="GO" id="GO:0019843">
    <property type="term" value="F:rRNA binding"/>
    <property type="evidence" value="ECO:0007669"/>
    <property type="project" value="UniProtKB-UniRule"/>
</dbReference>
<dbReference type="GO" id="GO:0003735">
    <property type="term" value="F:structural constituent of ribosome"/>
    <property type="evidence" value="ECO:0007669"/>
    <property type="project" value="InterPro"/>
</dbReference>
<dbReference type="GO" id="GO:0006412">
    <property type="term" value="P:translation"/>
    <property type="evidence" value="ECO:0007669"/>
    <property type="project" value="UniProtKB-UniRule"/>
</dbReference>
<dbReference type="CDD" id="cd00353">
    <property type="entry name" value="Ribosomal_S15p_S13e"/>
    <property type="match status" value="1"/>
</dbReference>
<dbReference type="FunFam" id="1.10.287.10:FF:000002">
    <property type="entry name" value="30S ribosomal protein S15"/>
    <property type="match status" value="1"/>
</dbReference>
<dbReference type="Gene3D" id="6.10.250.3130">
    <property type="match status" value="1"/>
</dbReference>
<dbReference type="Gene3D" id="1.10.287.10">
    <property type="entry name" value="S15/NS1, RNA-binding"/>
    <property type="match status" value="1"/>
</dbReference>
<dbReference type="HAMAP" id="MF_01343_B">
    <property type="entry name" value="Ribosomal_uS15_B"/>
    <property type="match status" value="1"/>
</dbReference>
<dbReference type="InterPro" id="IPR000589">
    <property type="entry name" value="Ribosomal_uS15"/>
</dbReference>
<dbReference type="InterPro" id="IPR005290">
    <property type="entry name" value="Ribosomal_uS15_bac-type"/>
</dbReference>
<dbReference type="InterPro" id="IPR009068">
    <property type="entry name" value="uS15_NS1_RNA-bd_sf"/>
</dbReference>
<dbReference type="NCBIfam" id="TIGR00952">
    <property type="entry name" value="S15_bact"/>
    <property type="match status" value="1"/>
</dbReference>
<dbReference type="PANTHER" id="PTHR23321">
    <property type="entry name" value="RIBOSOMAL PROTEIN S15, BACTERIAL AND ORGANELLAR"/>
    <property type="match status" value="1"/>
</dbReference>
<dbReference type="PANTHER" id="PTHR23321:SF26">
    <property type="entry name" value="SMALL RIBOSOMAL SUBUNIT PROTEIN US15M"/>
    <property type="match status" value="1"/>
</dbReference>
<dbReference type="Pfam" id="PF00312">
    <property type="entry name" value="Ribosomal_S15"/>
    <property type="match status" value="1"/>
</dbReference>
<dbReference type="SMART" id="SM01387">
    <property type="entry name" value="Ribosomal_S15"/>
    <property type="match status" value="1"/>
</dbReference>
<dbReference type="SUPFAM" id="SSF47060">
    <property type="entry name" value="S15/NS1 RNA-binding domain"/>
    <property type="match status" value="1"/>
</dbReference>
<dbReference type="PROSITE" id="PS00362">
    <property type="entry name" value="RIBOSOMAL_S15"/>
    <property type="match status" value="1"/>
</dbReference>
<gene>
    <name evidence="1" type="primary">rpsO</name>
    <name type="ordered locus">CJJ81176_0892</name>
</gene>
<protein>
    <recommendedName>
        <fullName evidence="1">Small ribosomal subunit protein uS15</fullName>
    </recommendedName>
    <alternativeName>
        <fullName evidence="2">30S ribosomal protein S15</fullName>
    </alternativeName>
</protein>
<reference key="1">
    <citation type="journal article" date="1994" name="Gene">
        <title>Genetic organization of the region upstream from the Campylobacter jejuni flagellar gene flhA.</title>
        <authorList>
            <person name="Miller S."/>
            <person name="Pesci E.C."/>
            <person name="Pickett C.L."/>
        </authorList>
    </citation>
    <scope>NUCLEOTIDE SEQUENCE [GENOMIC DNA]</scope>
</reference>
<reference key="2">
    <citation type="submission" date="2006-12" db="EMBL/GenBank/DDBJ databases">
        <authorList>
            <person name="Fouts D.E."/>
            <person name="Nelson K.E."/>
            <person name="Sebastian Y."/>
        </authorList>
    </citation>
    <scope>NUCLEOTIDE SEQUENCE [LARGE SCALE GENOMIC DNA]</scope>
    <source>
        <strain>81-176</strain>
    </source>
</reference>
<comment type="function">
    <text evidence="1">One of the primary rRNA binding proteins, it binds directly to 16S rRNA where it helps nucleate assembly of the platform of the 30S subunit by binding and bridging several RNA helices of the 16S rRNA.</text>
</comment>
<comment type="function">
    <text evidence="1">Forms an intersubunit bridge (bridge B4) with the 23S rRNA of the 50S subunit in the ribosome.</text>
</comment>
<comment type="subunit">
    <text evidence="1">Part of the 30S ribosomal subunit. Forms a bridge to the 50S subunit in the 70S ribosome, contacting the 23S rRNA.</text>
</comment>
<comment type="similarity">
    <text evidence="1">Belongs to the universal ribosomal protein uS15 family.</text>
</comment>
<accession>A1VZL9</accession>
<accession>P49392</accession>
<accession>Q9PP46</accession>
<name>RS15_CAMJJ</name>
<feature type="chain" id="PRO_0000285825" description="Small ribosomal subunit protein uS15">
    <location>
        <begin position="1"/>
        <end position="90"/>
    </location>
</feature>
<feature type="sequence conflict" description="In Ref. 1; AAA61510." evidence="2" ref="1">
    <original>K</original>
    <variation>N</variation>
    <location>
        <position position="48"/>
    </location>
</feature>